<protein>
    <recommendedName>
        <fullName evidence="1">Imidazolonepropionase</fullName>
        <ecNumber evidence="1">3.5.2.7</ecNumber>
    </recommendedName>
    <alternativeName>
        <fullName evidence="1">Imidazolone-5-propionate hydrolase</fullName>
    </alternativeName>
</protein>
<accession>Q9RZ05</accession>
<feature type="chain" id="PRO_0000160947" description="Imidazolonepropionase">
    <location>
        <begin position="1"/>
        <end position="399"/>
    </location>
</feature>
<feature type="region of interest" description="Disordered" evidence="2">
    <location>
        <begin position="1"/>
        <end position="20"/>
    </location>
</feature>
<feature type="compositionally biased region" description="Polar residues" evidence="2">
    <location>
        <begin position="1"/>
        <end position="13"/>
    </location>
</feature>
<feature type="binding site" evidence="1">
    <location>
        <position position="74"/>
    </location>
    <ligand>
        <name>Fe(3+)</name>
        <dbReference type="ChEBI" id="CHEBI:29034"/>
    </ligand>
</feature>
<feature type="binding site" evidence="1">
    <location>
        <position position="74"/>
    </location>
    <ligand>
        <name>Zn(2+)</name>
        <dbReference type="ChEBI" id="CHEBI:29105"/>
    </ligand>
</feature>
<feature type="binding site" evidence="1">
    <location>
        <position position="76"/>
    </location>
    <ligand>
        <name>Fe(3+)</name>
        <dbReference type="ChEBI" id="CHEBI:29034"/>
    </ligand>
</feature>
<feature type="binding site" evidence="1">
    <location>
        <position position="76"/>
    </location>
    <ligand>
        <name>Zn(2+)</name>
        <dbReference type="ChEBI" id="CHEBI:29105"/>
    </ligand>
</feature>
<feature type="binding site" evidence="1">
    <location>
        <position position="83"/>
    </location>
    <ligand>
        <name>4-imidazolone-5-propanoate</name>
        <dbReference type="ChEBI" id="CHEBI:77893"/>
    </ligand>
</feature>
<feature type="binding site" evidence="1">
    <location>
        <position position="146"/>
    </location>
    <ligand>
        <name>4-imidazolone-5-propanoate</name>
        <dbReference type="ChEBI" id="CHEBI:77893"/>
    </ligand>
</feature>
<feature type="binding site" evidence="1">
    <location>
        <position position="146"/>
    </location>
    <ligand>
        <name>N-formimidoyl-L-glutamate</name>
        <dbReference type="ChEBI" id="CHEBI:58928"/>
    </ligand>
</feature>
<feature type="binding site" evidence="1">
    <location>
        <position position="176"/>
    </location>
    <ligand>
        <name>4-imidazolone-5-propanoate</name>
        <dbReference type="ChEBI" id="CHEBI:77893"/>
    </ligand>
</feature>
<feature type="binding site" evidence="1">
    <location>
        <position position="238"/>
    </location>
    <ligand>
        <name>Fe(3+)</name>
        <dbReference type="ChEBI" id="CHEBI:29034"/>
    </ligand>
</feature>
<feature type="binding site" evidence="1">
    <location>
        <position position="238"/>
    </location>
    <ligand>
        <name>Zn(2+)</name>
        <dbReference type="ChEBI" id="CHEBI:29105"/>
    </ligand>
</feature>
<feature type="binding site" evidence="1">
    <location>
        <position position="241"/>
    </location>
    <ligand>
        <name>4-imidazolone-5-propanoate</name>
        <dbReference type="ChEBI" id="CHEBI:77893"/>
    </ligand>
</feature>
<feature type="binding site" evidence="1">
    <location>
        <position position="312"/>
    </location>
    <ligand>
        <name>Fe(3+)</name>
        <dbReference type="ChEBI" id="CHEBI:29034"/>
    </ligand>
</feature>
<feature type="binding site" evidence="1">
    <location>
        <position position="312"/>
    </location>
    <ligand>
        <name>Zn(2+)</name>
        <dbReference type="ChEBI" id="CHEBI:29105"/>
    </ligand>
</feature>
<feature type="binding site" evidence="1">
    <location>
        <position position="314"/>
    </location>
    <ligand>
        <name>N-formimidoyl-L-glutamate</name>
        <dbReference type="ChEBI" id="CHEBI:58928"/>
    </ligand>
</feature>
<feature type="binding site" evidence="1">
    <location>
        <position position="316"/>
    </location>
    <ligand>
        <name>N-formimidoyl-L-glutamate</name>
        <dbReference type="ChEBI" id="CHEBI:58928"/>
    </ligand>
</feature>
<feature type="binding site" evidence="1">
    <location>
        <position position="317"/>
    </location>
    <ligand>
        <name>4-imidazolone-5-propanoate</name>
        <dbReference type="ChEBI" id="CHEBI:77893"/>
    </ligand>
</feature>
<comment type="function">
    <text evidence="1">Catalyzes the hydrolytic cleavage of the carbon-nitrogen bond in imidazolone-5-propanoate to yield N-formimidoyl-L-glutamate. It is the third step in the universal histidine degradation pathway.</text>
</comment>
<comment type="catalytic activity">
    <reaction evidence="1">
        <text>4-imidazolone-5-propanoate + H2O = N-formimidoyl-L-glutamate</text>
        <dbReference type="Rhea" id="RHEA:23660"/>
        <dbReference type="ChEBI" id="CHEBI:15377"/>
        <dbReference type="ChEBI" id="CHEBI:58928"/>
        <dbReference type="ChEBI" id="CHEBI:77893"/>
        <dbReference type="EC" id="3.5.2.7"/>
    </reaction>
</comment>
<comment type="cofactor">
    <cofactor evidence="1">
        <name>Zn(2+)</name>
        <dbReference type="ChEBI" id="CHEBI:29105"/>
    </cofactor>
    <cofactor evidence="1">
        <name>Fe(3+)</name>
        <dbReference type="ChEBI" id="CHEBI:29034"/>
    </cofactor>
    <text evidence="1">Binds 1 zinc or iron ion per subunit.</text>
</comment>
<comment type="pathway">
    <text evidence="1">Amino-acid degradation; L-histidine degradation into L-glutamate; N-formimidoyl-L-glutamate from L-histidine: step 3/3.</text>
</comment>
<comment type="subcellular location">
    <subcellularLocation>
        <location evidence="1">Cytoplasm</location>
    </subcellularLocation>
</comment>
<comment type="similarity">
    <text evidence="1">Belongs to the metallo-dependent hydrolases superfamily. HutI family.</text>
</comment>
<proteinExistence type="inferred from homology"/>
<gene>
    <name evidence="1" type="primary">hutI</name>
    <name type="ordered locus">DR_A0148</name>
</gene>
<organism>
    <name type="scientific">Deinococcus radiodurans (strain ATCC 13939 / DSM 20539 / JCM 16871 / CCUG 27074 / LMG 4051 / NBRC 15346 / NCIMB 9279 / VKM B-1422 / R1)</name>
    <dbReference type="NCBI Taxonomy" id="243230"/>
    <lineage>
        <taxon>Bacteria</taxon>
        <taxon>Thermotogati</taxon>
        <taxon>Deinococcota</taxon>
        <taxon>Deinococci</taxon>
        <taxon>Deinococcales</taxon>
        <taxon>Deinococcaceae</taxon>
        <taxon>Deinococcus</taxon>
    </lineage>
</organism>
<keyword id="KW-0963">Cytoplasm</keyword>
<keyword id="KW-0369">Histidine metabolism</keyword>
<keyword id="KW-0378">Hydrolase</keyword>
<keyword id="KW-0408">Iron</keyword>
<keyword id="KW-0479">Metal-binding</keyword>
<keyword id="KW-1185">Reference proteome</keyword>
<keyword id="KW-0862">Zinc</keyword>
<sequence>MSETLYTGISQLATPRPGPQRGAAMGDLHIIEDAALLVRGGVIQWVGPRAAAPTATHVHDLGGRAVVPGLVDPHTHAVWAGDRLSDWEAKLQGATYEEILARGGGIRSTMRATAAADVAELVALARPRLASLRASGATTTEVKSGYGLDFDAELRMLRAVRELQAEFELRPTLLIHVPPQEGRAEYVVGVCAELIPQVAREGLAEALDVFCEKEAFSVEETRTMFAAAQAHGLRVKLHADQFHAIGGTELACEVGALSVDHLEASGAAQIAALAASETVATILPGVTLHLGLPAAPGRQLIDSGAIVAIGTDLNPGSSPLFSTQLALALAVRLCLLTPAEALSACTVNAAYALGLSDRGSLSAGQRADFLVLNGQDWREVAYTLGGNAVAEVYLAGAQL</sequence>
<evidence type="ECO:0000255" key="1">
    <source>
        <dbReference type="HAMAP-Rule" id="MF_00372"/>
    </source>
</evidence>
<evidence type="ECO:0000256" key="2">
    <source>
        <dbReference type="SAM" id="MobiDB-lite"/>
    </source>
</evidence>
<name>HUTI_DEIRA</name>
<dbReference type="EC" id="3.5.2.7" evidence="1"/>
<dbReference type="EMBL" id="AE001825">
    <property type="protein sequence ID" value="AAF12215.1"/>
    <property type="molecule type" value="Genomic_DNA"/>
</dbReference>
<dbReference type="PIR" id="G75610">
    <property type="entry name" value="G75610"/>
</dbReference>
<dbReference type="RefSeq" id="NP_285472.1">
    <property type="nucleotide sequence ID" value="NC_001264.1"/>
</dbReference>
<dbReference type="RefSeq" id="WP_010889408.1">
    <property type="nucleotide sequence ID" value="NC_001264.1"/>
</dbReference>
<dbReference type="SMR" id="Q9RZ05"/>
<dbReference type="FunCoup" id="Q9RZ05">
    <property type="interactions" value="48"/>
</dbReference>
<dbReference type="STRING" id="243230.DR_A0148"/>
<dbReference type="PaxDb" id="243230-DR_A0148"/>
<dbReference type="EnsemblBacteria" id="AAF12215">
    <property type="protein sequence ID" value="AAF12215"/>
    <property type="gene ID" value="DR_A0148"/>
</dbReference>
<dbReference type="GeneID" id="69519043"/>
<dbReference type="KEGG" id="dra:DR_A0148"/>
<dbReference type="PATRIC" id="fig|243230.17.peg.3035"/>
<dbReference type="eggNOG" id="COG1228">
    <property type="taxonomic scope" value="Bacteria"/>
</dbReference>
<dbReference type="HOGENOM" id="CLU_041647_0_1_0"/>
<dbReference type="InParanoid" id="Q9RZ05"/>
<dbReference type="OrthoDB" id="9776455at2"/>
<dbReference type="UniPathway" id="UPA00379">
    <property type="reaction ID" value="UER00551"/>
</dbReference>
<dbReference type="Proteomes" id="UP000002524">
    <property type="component" value="Chromosome 2"/>
</dbReference>
<dbReference type="GO" id="GO:0005737">
    <property type="term" value="C:cytoplasm"/>
    <property type="evidence" value="ECO:0007669"/>
    <property type="project" value="UniProtKB-SubCell"/>
</dbReference>
<dbReference type="GO" id="GO:0050480">
    <property type="term" value="F:imidazolonepropionase activity"/>
    <property type="evidence" value="ECO:0000318"/>
    <property type="project" value="GO_Central"/>
</dbReference>
<dbReference type="GO" id="GO:0005506">
    <property type="term" value="F:iron ion binding"/>
    <property type="evidence" value="ECO:0007669"/>
    <property type="project" value="UniProtKB-UniRule"/>
</dbReference>
<dbReference type="GO" id="GO:0008270">
    <property type="term" value="F:zinc ion binding"/>
    <property type="evidence" value="ECO:0007669"/>
    <property type="project" value="UniProtKB-UniRule"/>
</dbReference>
<dbReference type="GO" id="GO:0006548">
    <property type="term" value="P:L-histidine catabolic process"/>
    <property type="evidence" value="ECO:0000318"/>
    <property type="project" value="GO_Central"/>
</dbReference>
<dbReference type="GO" id="GO:0019556">
    <property type="term" value="P:L-histidine catabolic process to glutamate and formamide"/>
    <property type="evidence" value="ECO:0007669"/>
    <property type="project" value="UniProtKB-UniPathway"/>
</dbReference>
<dbReference type="GO" id="GO:0019557">
    <property type="term" value="P:L-histidine catabolic process to glutamate and formate"/>
    <property type="evidence" value="ECO:0007669"/>
    <property type="project" value="UniProtKB-UniPathway"/>
</dbReference>
<dbReference type="CDD" id="cd01296">
    <property type="entry name" value="Imidazolone-5PH"/>
    <property type="match status" value="1"/>
</dbReference>
<dbReference type="FunFam" id="3.20.20.140:FF:000007">
    <property type="entry name" value="Imidazolonepropionase"/>
    <property type="match status" value="1"/>
</dbReference>
<dbReference type="Gene3D" id="3.20.20.140">
    <property type="entry name" value="Metal-dependent hydrolases"/>
    <property type="match status" value="1"/>
</dbReference>
<dbReference type="Gene3D" id="2.30.40.10">
    <property type="entry name" value="Urease, subunit C, domain 1"/>
    <property type="match status" value="1"/>
</dbReference>
<dbReference type="HAMAP" id="MF_00372">
    <property type="entry name" value="HutI"/>
    <property type="match status" value="1"/>
</dbReference>
<dbReference type="InterPro" id="IPR006680">
    <property type="entry name" value="Amidohydro-rel"/>
</dbReference>
<dbReference type="InterPro" id="IPR005920">
    <property type="entry name" value="HutI"/>
</dbReference>
<dbReference type="InterPro" id="IPR011059">
    <property type="entry name" value="Metal-dep_hydrolase_composite"/>
</dbReference>
<dbReference type="InterPro" id="IPR032466">
    <property type="entry name" value="Metal_Hydrolase"/>
</dbReference>
<dbReference type="NCBIfam" id="TIGR01224">
    <property type="entry name" value="hutI"/>
    <property type="match status" value="1"/>
</dbReference>
<dbReference type="PANTHER" id="PTHR42752">
    <property type="entry name" value="IMIDAZOLONEPROPIONASE"/>
    <property type="match status" value="1"/>
</dbReference>
<dbReference type="PANTHER" id="PTHR42752:SF1">
    <property type="entry name" value="IMIDAZOLONEPROPIONASE-RELATED"/>
    <property type="match status" value="1"/>
</dbReference>
<dbReference type="Pfam" id="PF01979">
    <property type="entry name" value="Amidohydro_1"/>
    <property type="match status" value="1"/>
</dbReference>
<dbReference type="SUPFAM" id="SSF51338">
    <property type="entry name" value="Composite domain of metallo-dependent hydrolases"/>
    <property type="match status" value="2"/>
</dbReference>
<dbReference type="SUPFAM" id="SSF51556">
    <property type="entry name" value="Metallo-dependent hydrolases"/>
    <property type="match status" value="1"/>
</dbReference>
<reference key="1">
    <citation type="journal article" date="1999" name="Science">
        <title>Genome sequence of the radioresistant bacterium Deinococcus radiodurans R1.</title>
        <authorList>
            <person name="White O."/>
            <person name="Eisen J.A."/>
            <person name="Heidelberg J.F."/>
            <person name="Hickey E.K."/>
            <person name="Peterson J.D."/>
            <person name="Dodson R.J."/>
            <person name="Haft D.H."/>
            <person name="Gwinn M.L."/>
            <person name="Nelson W.C."/>
            <person name="Richardson D.L."/>
            <person name="Moffat K.S."/>
            <person name="Qin H."/>
            <person name="Jiang L."/>
            <person name="Pamphile W."/>
            <person name="Crosby M."/>
            <person name="Shen M."/>
            <person name="Vamathevan J.J."/>
            <person name="Lam P."/>
            <person name="McDonald L.A."/>
            <person name="Utterback T.R."/>
            <person name="Zalewski C."/>
            <person name="Makarova K.S."/>
            <person name="Aravind L."/>
            <person name="Daly M.J."/>
            <person name="Minton K.W."/>
            <person name="Fleischmann R.D."/>
            <person name="Ketchum K.A."/>
            <person name="Nelson K.E."/>
            <person name="Salzberg S.L."/>
            <person name="Smith H.O."/>
            <person name="Venter J.C."/>
            <person name="Fraser C.M."/>
        </authorList>
    </citation>
    <scope>NUCLEOTIDE SEQUENCE [LARGE SCALE GENOMIC DNA]</scope>
    <source>
        <strain>ATCC 13939 / DSM 20539 / JCM 16871 / CCUG 27074 / LMG 4051 / NBRC 15346 / NCIMB 9279 / VKM B-1422 / R1</strain>
    </source>
</reference>